<comment type="PTM">
    <text evidence="1">The N-terminus is cleaved by ribosomal processing cysteine protease Prp.</text>
</comment>
<comment type="similarity">
    <text evidence="2">Belongs to the bacterial ribosomal protein bL27 family.</text>
</comment>
<dbReference type="EMBL" id="AE009948">
    <property type="protein sequence ID" value="AAN00239.1"/>
    <property type="molecule type" value="Genomic_DNA"/>
</dbReference>
<dbReference type="RefSeq" id="NP_688366.1">
    <property type="nucleotide sequence ID" value="NC_004116.1"/>
</dbReference>
<dbReference type="SMR" id="Q8DYV5"/>
<dbReference type="STRING" id="208435.SAG1368"/>
<dbReference type="KEGG" id="sag:SAG1368"/>
<dbReference type="PATRIC" id="fig|208435.3.peg.1376"/>
<dbReference type="HOGENOM" id="CLU_095424_4_0_9"/>
<dbReference type="OrthoDB" id="9803474at2"/>
<dbReference type="Proteomes" id="UP000000821">
    <property type="component" value="Chromosome"/>
</dbReference>
<dbReference type="GO" id="GO:0022625">
    <property type="term" value="C:cytosolic large ribosomal subunit"/>
    <property type="evidence" value="ECO:0007669"/>
    <property type="project" value="TreeGrafter"/>
</dbReference>
<dbReference type="GO" id="GO:0003735">
    <property type="term" value="F:structural constituent of ribosome"/>
    <property type="evidence" value="ECO:0007669"/>
    <property type="project" value="InterPro"/>
</dbReference>
<dbReference type="GO" id="GO:0006412">
    <property type="term" value="P:translation"/>
    <property type="evidence" value="ECO:0007669"/>
    <property type="project" value="UniProtKB-UniRule"/>
</dbReference>
<dbReference type="FunFam" id="2.40.50.100:FF:000004">
    <property type="entry name" value="50S ribosomal protein L27"/>
    <property type="match status" value="1"/>
</dbReference>
<dbReference type="Gene3D" id="2.40.50.100">
    <property type="match status" value="1"/>
</dbReference>
<dbReference type="HAMAP" id="MF_00539">
    <property type="entry name" value="Ribosomal_bL27"/>
    <property type="match status" value="1"/>
</dbReference>
<dbReference type="InterPro" id="IPR001684">
    <property type="entry name" value="Ribosomal_bL27"/>
</dbReference>
<dbReference type="InterPro" id="IPR018261">
    <property type="entry name" value="Ribosomal_bL27_CS"/>
</dbReference>
<dbReference type="NCBIfam" id="TIGR00062">
    <property type="entry name" value="L27"/>
    <property type="match status" value="1"/>
</dbReference>
<dbReference type="PANTHER" id="PTHR15893:SF0">
    <property type="entry name" value="LARGE RIBOSOMAL SUBUNIT PROTEIN BL27M"/>
    <property type="match status" value="1"/>
</dbReference>
<dbReference type="PANTHER" id="PTHR15893">
    <property type="entry name" value="RIBOSOMAL PROTEIN L27"/>
    <property type="match status" value="1"/>
</dbReference>
<dbReference type="Pfam" id="PF01016">
    <property type="entry name" value="Ribosomal_L27"/>
    <property type="match status" value="1"/>
</dbReference>
<dbReference type="PRINTS" id="PR00063">
    <property type="entry name" value="RIBOSOMALL27"/>
</dbReference>
<dbReference type="SUPFAM" id="SSF110324">
    <property type="entry name" value="Ribosomal L27 protein-like"/>
    <property type="match status" value="1"/>
</dbReference>
<dbReference type="PROSITE" id="PS00831">
    <property type="entry name" value="RIBOSOMAL_L27"/>
    <property type="match status" value="1"/>
</dbReference>
<proteinExistence type="inferred from homology"/>
<reference key="1">
    <citation type="journal article" date="2002" name="Proc. Natl. Acad. Sci. U.S.A.">
        <title>Complete genome sequence and comparative genomic analysis of an emerging human pathogen, serotype V Streptococcus agalactiae.</title>
        <authorList>
            <person name="Tettelin H."/>
            <person name="Masignani V."/>
            <person name="Cieslewicz M.J."/>
            <person name="Eisen J.A."/>
            <person name="Peterson S.N."/>
            <person name="Wessels M.R."/>
            <person name="Paulsen I.T."/>
            <person name="Nelson K.E."/>
            <person name="Margarit I."/>
            <person name="Read T.D."/>
            <person name="Madoff L.C."/>
            <person name="Wolf A.M."/>
            <person name="Beanan M.J."/>
            <person name="Brinkac L.M."/>
            <person name="Daugherty S.C."/>
            <person name="DeBoy R.T."/>
            <person name="Durkin A.S."/>
            <person name="Kolonay J.F."/>
            <person name="Madupu R."/>
            <person name="Lewis M.R."/>
            <person name="Radune D."/>
            <person name="Fedorova N.B."/>
            <person name="Scanlan D."/>
            <person name="Khouri H.M."/>
            <person name="Mulligan S."/>
            <person name="Carty H.A."/>
            <person name="Cline R.T."/>
            <person name="Van Aken S.E."/>
            <person name="Gill J."/>
            <person name="Scarselli M."/>
            <person name="Mora M."/>
            <person name="Iacobini E.T."/>
            <person name="Brettoni C."/>
            <person name="Galli G."/>
            <person name="Mariani M."/>
            <person name="Vegni F."/>
            <person name="Maione D."/>
            <person name="Rinaudo D."/>
            <person name="Rappuoli R."/>
            <person name="Telford J.L."/>
            <person name="Kasper D.L."/>
            <person name="Grandi G."/>
            <person name="Fraser C.M."/>
        </authorList>
    </citation>
    <scope>NUCLEOTIDE SEQUENCE [LARGE SCALE GENOMIC DNA]</scope>
    <source>
        <strain>ATCC BAA-611 / 2603 V/R</strain>
    </source>
</reference>
<name>RL27_STRA5</name>
<organism>
    <name type="scientific">Streptococcus agalactiae serotype V (strain ATCC BAA-611 / 2603 V/R)</name>
    <dbReference type="NCBI Taxonomy" id="208435"/>
    <lineage>
        <taxon>Bacteria</taxon>
        <taxon>Bacillati</taxon>
        <taxon>Bacillota</taxon>
        <taxon>Bacilli</taxon>
        <taxon>Lactobacillales</taxon>
        <taxon>Streptococcaceae</taxon>
        <taxon>Streptococcus</taxon>
    </lineage>
</organism>
<protein>
    <recommendedName>
        <fullName evidence="2">Large ribosomal subunit protein bL27</fullName>
    </recommendedName>
    <alternativeName>
        <fullName evidence="4">50S ribosomal protein L27</fullName>
    </alternativeName>
</protein>
<keyword id="KW-1185">Reference proteome</keyword>
<keyword id="KW-0687">Ribonucleoprotein</keyword>
<keyword id="KW-0689">Ribosomal protein</keyword>
<gene>
    <name evidence="2" type="primary">rpmA</name>
    <name type="ordered locus">SAG1368</name>
</gene>
<accession>Q8DYV5</accession>
<feature type="propeptide" id="PRO_0000459946" evidence="1">
    <location>
        <begin position="1"/>
        <end position="9"/>
    </location>
</feature>
<feature type="chain" id="PRO_0000181173" description="Large ribosomal subunit protein bL27">
    <location>
        <begin position="10"/>
        <end position="94"/>
    </location>
</feature>
<feature type="region of interest" description="Disordered" evidence="3">
    <location>
        <begin position="11"/>
        <end position="33"/>
    </location>
</feature>
<sequence length="94" mass="10017">MNLANLQLFAHKKGGGSTSNGRDSQAKRLGAKAADGQTVSGGSILYRQRGTHIYPGANVGRGGDDTLFAKVEGVVRFERKGRDKKQVSVYPIAK</sequence>
<evidence type="ECO:0000250" key="1">
    <source>
        <dbReference type="UniProtKB" id="Q2FXT0"/>
    </source>
</evidence>
<evidence type="ECO:0000255" key="2">
    <source>
        <dbReference type="HAMAP-Rule" id="MF_00539"/>
    </source>
</evidence>
<evidence type="ECO:0000256" key="3">
    <source>
        <dbReference type="SAM" id="MobiDB-lite"/>
    </source>
</evidence>
<evidence type="ECO:0000305" key="4"/>